<dbReference type="EMBL" id="AE014295">
    <property type="protein sequence ID" value="AAN24798.1"/>
    <property type="molecule type" value="Genomic_DNA"/>
</dbReference>
<dbReference type="RefSeq" id="NP_696162.1">
    <property type="nucleotide sequence ID" value="NC_004307.2"/>
</dbReference>
<dbReference type="RefSeq" id="WP_011068239.1">
    <property type="nucleotide sequence ID" value="NC_004307.2"/>
</dbReference>
<dbReference type="SMR" id="Q8G5L9"/>
<dbReference type="STRING" id="206672.BL0990"/>
<dbReference type="EnsemblBacteria" id="AAN24798">
    <property type="protein sequence ID" value="AAN24798"/>
    <property type="gene ID" value="BL0990"/>
</dbReference>
<dbReference type="KEGG" id="blo:BL0990"/>
<dbReference type="PATRIC" id="fig|206672.9.peg.692"/>
<dbReference type="HOGENOM" id="CLU_009621_2_1_11"/>
<dbReference type="OrthoDB" id="9806651at2"/>
<dbReference type="PhylomeDB" id="Q8G5L9"/>
<dbReference type="Proteomes" id="UP000000439">
    <property type="component" value="Chromosome"/>
</dbReference>
<dbReference type="GO" id="GO:0005737">
    <property type="term" value="C:cytoplasm"/>
    <property type="evidence" value="ECO:0007669"/>
    <property type="project" value="UniProtKB-SubCell"/>
</dbReference>
<dbReference type="GO" id="GO:0009380">
    <property type="term" value="C:excinuclease repair complex"/>
    <property type="evidence" value="ECO:0007669"/>
    <property type="project" value="InterPro"/>
</dbReference>
<dbReference type="GO" id="GO:0005524">
    <property type="term" value="F:ATP binding"/>
    <property type="evidence" value="ECO:0007669"/>
    <property type="project" value="UniProtKB-UniRule"/>
</dbReference>
<dbReference type="GO" id="GO:0016887">
    <property type="term" value="F:ATP hydrolysis activity"/>
    <property type="evidence" value="ECO:0007669"/>
    <property type="project" value="InterPro"/>
</dbReference>
<dbReference type="GO" id="GO:0003677">
    <property type="term" value="F:DNA binding"/>
    <property type="evidence" value="ECO:0007669"/>
    <property type="project" value="UniProtKB-UniRule"/>
</dbReference>
<dbReference type="GO" id="GO:0009381">
    <property type="term" value="F:excinuclease ABC activity"/>
    <property type="evidence" value="ECO:0007669"/>
    <property type="project" value="UniProtKB-UniRule"/>
</dbReference>
<dbReference type="GO" id="GO:0006289">
    <property type="term" value="P:nucleotide-excision repair"/>
    <property type="evidence" value="ECO:0007669"/>
    <property type="project" value="UniProtKB-UniRule"/>
</dbReference>
<dbReference type="GO" id="GO:0009432">
    <property type="term" value="P:SOS response"/>
    <property type="evidence" value="ECO:0007669"/>
    <property type="project" value="UniProtKB-UniRule"/>
</dbReference>
<dbReference type="CDD" id="cd17916">
    <property type="entry name" value="DEXHc_UvrB"/>
    <property type="match status" value="1"/>
</dbReference>
<dbReference type="CDD" id="cd18790">
    <property type="entry name" value="SF2_C_UvrB"/>
    <property type="match status" value="1"/>
</dbReference>
<dbReference type="FunFam" id="4.10.860.10:FF:000009">
    <property type="entry name" value="UvrABC system protein B"/>
    <property type="match status" value="1"/>
</dbReference>
<dbReference type="Gene3D" id="3.40.50.300">
    <property type="entry name" value="P-loop containing nucleotide triphosphate hydrolases"/>
    <property type="match status" value="3"/>
</dbReference>
<dbReference type="Gene3D" id="4.10.860.10">
    <property type="entry name" value="UVR domain"/>
    <property type="match status" value="1"/>
</dbReference>
<dbReference type="HAMAP" id="MF_00204">
    <property type="entry name" value="UvrB"/>
    <property type="match status" value="1"/>
</dbReference>
<dbReference type="InterPro" id="IPR006935">
    <property type="entry name" value="Helicase/UvrB_N"/>
</dbReference>
<dbReference type="InterPro" id="IPR014001">
    <property type="entry name" value="Helicase_ATP-bd"/>
</dbReference>
<dbReference type="InterPro" id="IPR001650">
    <property type="entry name" value="Helicase_C-like"/>
</dbReference>
<dbReference type="InterPro" id="IPR027417">
    <property type="entry name" value="P-loop_NTPase"/>
</dbReference>
<dbReference type="InterPro" id="IPR001943">
    <property type="entry name" value="UVR_dom"/>
</dbReference>
<dbReference type="InterPro" id="IPR036876">
    <property type="entry name" value="UVR_dom_sf"/>
</dbReference>
<dbReference type="InterPro" id="IPR004807">
    <property type="entry name" value="UvrB"/>
</dbReference>
<dbReference type="InterPro" id="IPR041471">
    <property type="entry name" value="UvrB_inter"/>
</dbReference>
<dbReference type="InterPro" id="IPR024759">
    <property type="entry name" value="UvrB_YAD/RRR_dom"/>
</dbReference>
<dbReference type="NCBIfam" id="NF003673">
    <property type="entry name" value="PRK05298.1"/>
    <property type="match status" value="1"/>
</dbReference>
<dbReference type="NCBIfam" id="TIGR00631">
    <property type="entry name" value="uvrb"/>
    <property type="match status" value="1"/>
</dbReference>
<dbReference type="PANTHER" id="PTHR24029">
    <property type="entry name" value="UVRABC SYSTEM PROTEIN B"/>
    <property type="match status" value="1"/>
</dbReference>
<dbReference type="PANTHER" id="PTHR24029:SF0">
    <property type="entry name" value="UVRABC SYSTEM PROTEIN B"/>
    <property type="match status" value="1"/>
</dbReference>
<dbReference type="Pfam" id="PF00271">
    <property type="entry name" value="Helicase_C"/>
    <property type="match status" value="1"/>
</dbReference>
<dbReference type="Pfam" id="PF04851">
    <property type="entry name" value="ResIII"/>
    <property type="match status" value="1"/>
</dbReference>
<dbReference type="Pfam" id="PF02151">
    <property type="entry name" value="UVR"/>
    <property type="match status" value="1"/>
</dbReference>
<dbReference type="Pfam" id="PF12344">
    <property type="entry name" value="UvrB"/>
    <property type="match status" value="1"/>
</dbReference>
<dbReference type="Pfam" id="PF17757">
    <property type="entry name" value="UvrB_inter"/>
    <property type="match status" value="1"/>
</dbReference>
<dbReference type="SMART" id="SM00487">
    <property type="entry name" value="DEXDc"/>
    <property type="match status" value="1"/>
</dbReference>
<dbReference type="SMART" id="SM00490">
    <property type="entry name" value="HELICc"/>
    <property type="match status" value="1"/>
</dbReference>
<dbReference type="SUPFAM" id="SSF46600">
    <property type="entry name" value="C-terminal UvrC-binding domain of UvrB"/>
    <property type="match status" value="1"/>
</dbReference>
<dbReference type="SUPFAM" id="SSF52540">
    <property type="entry name" value="P-loop containing nucleoside triphosphate hydrolases"/>
    <property type="match status" value="2"/>
</dbReference>
<dbReference type="PROSITE" id="PS51192">
    <property type="entry name" value="HELICASE_ATP_BIND_1"/>
    <property type="match status" value="1"/>
</dbReference>
<dbReference type="PROSITE" id="PS51194">
    <property type="entry name" value="HELICASE_CTER"/>
    <property type="match status" value="1"/>
</dbReference>
<dbReference type="PROSITE" id="PS50151">
    <property type="entry name" value="UVR"/>
    <property type="match status" value="1"/>
</dbReference>
<reference key="1">
    <citation type="journal article" date="2002" name="Proc. Natl. Acad. Sci. U.S.A.">
        <title>The genome sequence of Bifidobacterium longum reflects its adaptation to the human gastrointestinal tract.</title>
        <authorList>
            <person name="Schell M.A."/>
            <person name="Karmirantzou M."/>
            <person name="Snel B."/>
            <person name="Vilanova D."/>
            <person name="Berger B."/>
            <person name="Pessi G."/>
            <person name="Zwahlen M.-C."/>
            <person name="Desiere F."/>
            <person name="Bork P."/>
            <person name="Delley M."/>
            <person name="Pridmore R.D."/>
            <person name="Arigoni F."/>
        </authorList>
    </citation>
    <scope>NUCLEOTIDE SEQUENCE [LARGE SCALE GENOMIC DNA]</scope>
    <source>
        <strain>NCC 2705</strain>
    </source>
</reference>
<proteinExistence type="inferred from homology"/>
<sequence>MGFNIERADKPFVVKSPYKPSGDQPQAIAELAERIENGENDVVLMGATGTGKTATTAWLIEKLQRPTLIIEPNKTLAAQLCAEFRELMPDNAVSYFVSYYDYYQPEAYIPQTDTYIEKDSNINDDVERLRHQATANLLTRRDCVVVATVSCIYGLGTPEEYAGRMLFLKVGQEINRDDLLRQFVAMQYKRNDIAFTRGTFRVRGDTVEIIPVYEELAVRIEFFGDEIDRISTLHPLTGDEIDEENEVHIFPASHYVAGPERMERALKTIREELEERLAELRKQGKELEAQRLNMRTTYDLEMLTQVGVCSGVENYSRHFDGRAAGTPPHTLLDFFPDDFLLVIDESHVTVPQIGAMYEGDASRKRTLVEHGFRLPSAMDNRPLKWPEFLQRVGQTVYLSATPGDYEMGLSDGVVEQIIRPTGLLDPKIDVRPVKGQIDDLLAEIKARVAKNERALVTTLTKKMAEDLTDYLLERGIKVEYLHSDVDTLRRVELLRMLREGKIDVIVGINLLREGLDLPEVSLVAILDADKEGFLRSYRSLIQTIGRAARNVSGTVIMYADETTEAMRQAIDETDRRRAKQIAYNQEHGIDPKPLIKKISDVNDMLAKEDVDTQTLLEGGYRNAGKAGNTHLGVPVLDPNEADKRHEEILKAGLPAQDLADLIRQLSEQMHTAAEQLQFELAARLRDEIRDLKKELRQMTEANK</sequence>
<evidence type="ECO:0000255" key="1">
    <source>
        <dbReference type="HAMAP-Rule" id="MF_00204"/>
    </source>
</evidence>
<name>UVRB_BIFLO</name>
<gene>
    <name evidence="1" type="primary">uvrB</name>
    <name type="ordered locus">BL0990</name>
</gene>
<accession>Q8G5L9</accession>
<protein>
    <recommendedName>
        <fullName evidence="1">UvrABC system protein B</fullName>
        <shortName evidence="1">Protein UvrB</shortName>
    </recommendedName>
    <alternativeName>
        <fullName evidence="1">Excinuclease ABC subunit B</fullName>
    </alternativeName>
</protein>
<organism>
    <name type="scientific">Bifidobacterium longum (strain NCC 2705)</name>
    <dbReference type="NCBI Taxonomy" id="206672"/>
    <lineage>
        <taxon>Bacteria</taxon>
        <taxon>Bacillati</taxon>
        <taxon>Actinomycetota</taxon>
        <taxon>Actinomycetes</taxon>
        <taxon>Bifidobacteriales</taxon>
        <taxon>Bifidobacteriaceae</taxon>
        <taxon>Bifidobacterium</taxon>
    </lineage>
</organism>
<feature type="chain" id="PRO_0000227289" description="UvrABC system protein B">
    <location>
        <begin position="1"/>
        <end position="703"/>
    </location>
</feature>
<feature type="domain" description="Helicase ATP-binding" evidence="1">
    <location>
        <begin position="33"/>
        <end position="419"/>
    </location>
</feature>
<feature type="domain" description="Helicase C-terminal" evidence="1">
    <location>
        <begin position="436"/>
        <end position="589"/>
    </location>
</feature>
<feature type="domain" description="UVR" evidence="1">
    <location>
        <begin position="659"/>
        <end position="694"/>
    </location>
</feature>
<feature type="short sequence motif" description="Beta-hairpin">
    <location>
        <begin position="99"/>
        <end position="122"/>
    </location>
</feature>
<feature type="binding site" evidence="1">
    <location>
        <begin position="46"/>
        <end position="53"/>
    </location>
    <ligand>
        <name>ATP</name>
        <dbReference type="ChEBI" id="CHEBI:30616"/>
    </ligand>
</feature>
<comment type="function">
    <text evidence="1">The UvrABC repair system catalyzes the recognition and processing of DNA lesions. A damage recognition complex composed of 2 UvrA and 2 UvrB subunits scans DNA for abnormalities. Upon binding of the UvrA(2)B(2) complex to a putative damaged site, the DNA wraps around one UvrB monomer. DNA wrap is dependent on ATP binding by UvrB and probably causes local melting of the DNA helix, facilitating insertion of UvrB beta-hairpin between the DNA strands. Then UvrB probes one DNA strand for the presence of a lesion. If a lesion is found the UvrA subunits dissociate and the UvrB-DNA preincision complex is formed. This complex is subsequently bound by UvrC and the second UvrB is released. If no lesion is found, the DNA wraps around the other UvrB subunit that will check the other stand for damage.</text>
</comment>
<comment type="subunit">
    <text evidence="1">Forms a heterotetramer with UvrA during the search for lesions. Interacts with UvrC in an incision complex.</text>
</comment>
<comment type="subcellular location">
    <subcellularLocation>
        <location evidence="1">Cytoplasm</location>
    </subcellularLocation>
</comment>
<comment type="domain">
    <text evidence="1">The beta-hairpin motif is involved in DNA binding.</text>
</comment>
<comment type="similarity">
    <text evidence="1">Belongs to the UvrB family.</text>
</comment>
<keyword id="KW-0067">ATP-binding</keyword>
<keyword id="KW-0963">Cytoplasm</keyword>
<keyword id="KW-0227">DNA damage</keyword>
<keyword id="KW-0228">DNA excision</keyword>
<keyword id="KW-0234">DNA repair</keyword>
<keyword id="KW-0267">Excision nuclease</keyword>
<keyword id="KW-0547">Nucleotide-binding</keyword>
<keyword id="KW-1185">Reference proteome</keyword>
<keyword id="KW-0742">SOS response</keyword>